<dbReference type="EMBL" id="CP000472">
    <property type="protein sequence ID" value="ACJ29354.1"/>
    <property type="molecule type" value="Genomic_DNA"/>
</dbReference>
<dbReference type="RefSeq" id="WP_020912710.1">
    <property type="nucleotide sequence ID" value="NC_011566.1"/>
</dbReference>
<dbReference type="SMR" id="B8CPB0"/>
<dbReference type="STRING" id="225849.swp_2618"/>
<dbReference type="KEGG" id="swp:swp_2618"/>
<dbReference type="eggNOG" id="COG0231">
    <property type="taxonomic scope" value="Bacteria"/>
</dbReference>
<dbReference type="HOGENOM" id="CLU_074944_2_1_6"/>
<dbReference type="OrthoDB" id="9801844at2"/>
<dbReference type="UniPathway" id="UPA00345"/>
<dbReference type="Proteomes" id="UP000000753">
    <property type="component" value="Chromosome"/>
</dbReference>
<dbReference type="GO" id="GO:0005737">
    <property type="term" value="C:cytoplasm"/>
    <property type="evidence" value="ECO:0007669"/>
    <property type="project" value="UniProtKB-SubCell"/>
</dbReference>
<dbReference type="GO" id="GO:0003746">
    <property type="term" value="F:translation elongation factor activity"/>
    <property type="evidence" value="ECO:0007669"/>
    <property type="project" value="UniProtKB-UniRule"/>
</dbReference>
<dbReference type="GO" id="GO:0043043">
    <property type="term" value="P:peptide biosynthetic process"/>
    <property type="evidence" value="ECO:0007669"/>
    <property type="project" value="InterPro"/>
</dbReference>
<dbReference type="CDD" id="cd04470">
    <property type="entry name" value="S1_EF-P_repeat_1"/>
    <property type="match status" value="1"/>
</dbReference>
<dbReference type="FunFam" id="2.30.30.30:FF:000003">
    <property type="entry name" value="Elongation factor P"/>
    <property type="match status" value="1"/>
</dbReference>
<dbReference type="FunFam" id="2.40.50.140:FF:000004">
    <property type="entry name" value="Elongation factor P"/>
    <property type="match status" value="1"/>
</dbReference>
<dbReference type="FunFam" id="2.40.50.140:FF:000009">
    <property type="entry name" value="Elongation factor P"/>
    <property type="match status" value="1"/>
</dbReference>
<dbReference type="Gene3D" id="2.30.30.30">
    <property type="match status" value="1"/>
</dbReference>
<dbReference type="Gene3D" id="2.40.50.140">
    <property type="entry name" value="Nucleic acid-binding proteins"/>
    <property type="match status" value="2"/>
</dbReference>
<dbReference type="HAMAP" id="MF_00141">
    <property type="entry name" value="EF_P"/>
    <property type="match status" value="1"/>
</dbReference>
<dbReference type="InterPro" id="IPR015365">
    <property type="entry name" value="Elong-fact-P_C"/>
</dbReference>
<dbReference type="InterPro" id="IPR012340">
    <property type="entry name" value="NA-bd_OB-fold"/>
</dbReference>
<dbReference type="InterPro" id="IPR014722">
    <property type="entry name" value="Rib_uL2_dom2"/>
</dbReference>
<dbReference type="InterPro" id="IPR020599">
    <property type="entry name" value="Transl_elong_fac_P/YeiP"/>
</dbReference>
<dbReference type="InterPro" id="IPR013185">
    <property type="entry name" value="Transl_elong_KOW-like"/>
</dbReference>
<dbReference type="InterPro" id="IPR001059">
    <property type="entry name" value="Transl_elong_P/YeiP_cen"/>
</dbReference>
<dbReference type="InterPro" id="IPR011768">
    <property type="entry name" value="Transl_elongation_fac_P"/>
</dbReference>
<dbReference type="InterPro" id="IPR008991">
    <property type="entry name" value="Translation_prot_SH3-like_sf"/>
</dbReference>
<dbReference type="NCBIfam" id="TIGR00038">
    <property type="entry name" value="efp"/>
    <property type="match status" value="1"/>
</dbReference>
<dbReference type="NCBIfam" id="NF001810">
    <property type="entry name" value="PRK00529.1"/>
    <property type="match status" value="1"/>
</dbReference>
<dbReference type="PANTHER" id="PTHR30053">
    <property type="entry name" value="ELONGATION FACTOR P"/>
    <property type="match status" value="1"/>
</dbReference>
<dbReference type="PANTHER" id="PTHR30053:SF12">
    <property type="entry name" value="ELONGATION FACTOR P (EF-P) FAMILY PROTEIN"/>
    <property type="match status" value="1"/>
</dbReference>
<dbReference type="Pfam" id="PF01132">
    <property type="entry name" value="EFP"/>
    <property type="match status" value="1"/>
</dbReference>
<dbReference type="Pfam" id="PF08207">
    <property type="entry name" value="EFP_N"/>
    <property type="match status" value="1"/>
</dbReference>
<dbReference type="Pfam" id="PF09285">
    <property type="entry name" value="Elong-fact-P_C"/>
    <property type="match status" value="1"/>
</dbReference>
<dbReference type="PIRSF" id="PIRSF005901">
    <property type="entry name" value="EF-P"/>
    <property type="match status" value="1"/>
</dbReference>
<dbReference type="SMART" id="SM01185">
    <property type="entry name" value="EFP"/>
    <property type="match status" value="1"/>
</dbReference>
<dbReference type="SMART" id="SM00841">
    <property type="entry name" value="Elong-fact-P_C"/>
    <property type="match status" value="1"/>
</dbReference>
<dbReference type="SUPFAM" id="SSF50249">
    <property type="entry name" value="Nucleic acid-binding proteins"/>
    <property type="match status" value="2"/>
</dbReference>
<dbReference type="SUPFAM" id="SSF50104">
    <property type="entry name" value="Translation proteins SH3-like domain"/>
    <property type="match status" value="1"/>
</dbReference>
<sequence length="186" mass="20700">MKTAHEVRPGNVIMLDGNPWVVLKTETSRSGRNAAVVKLKLKNVLLDSTTETSFKGEDKLDVIVLDRLDCTYSYFADPMYVFMDEEFNQYDVEAENLGDAAAYITDGMEDVCQVTFYEEKAISVELPIIVTREVTYTEPSARGDTSGKVMKPATIAGGSTLSVADFVKTGDMIEIDTRTNEFKKRV</sequence>
<evidence type="ECO:0000255" key="1">
    <source>
        <dbReference type="HAMAP-Rule" id="MF_00141"/>
    </source>
</evidence>
<organism>
    <name type="scientific">Shewanella piezotolerans (strain WP3 / JCM 13877)</name>
    <dbReference type="NCBI Taxonomy" id="225849"/>
    <lineage>
        <taxon>Bacteria</taxon>
        <taxon>Pseudomonadati</taxon>
        <taxon>Pseudomonadota</taxon>
        <taxon>Gammaproteobacteria</taxon>
        <taxon>Alteromonadales</taxon>
        <taxon>Shewanellaceae</taxon>
        <taxon>Shewanella</taxon>
    </lineage>
</organism>
<reference key="1">
    <citation type="journal article" date="2008" name="PLoS ONE">
        <title>Environmental adaptation: genomic analysis of the piezotolerant and psychrotolerant deep-sea iron reducing bacterium Shewanella piezotolerans WP3.</title>
        <authorList>
            <person name="Wang F."/>
            <person name="Wang J."/>
            <person name="Jian H."/>
            <person name="Zhang B."/>
            <person name="Li S."/>
            <person name="Wang F."/>
            <person name="Zeng X."/>
            <person name="Gao L."/>
            <person name="Bartlett D.H."/>
            <person name="Yu J."/>
            <person name="Hu S."/>
            <person name="Xiao X."/>
        </authorList>
    </citation>
    <scope>NUCLEOTIDE SEQUENCE [LARGE SCALE GENOMIC DNA]</scope>
    <source>
        <strain>WP3 / JCM 13877</strain>
    </source>
</reference>
<feature type="chain" id="PRO_1000117905" description="Elongation factor P">
    <location>
        <begin position="1"/>
        <end position="186"/>
    </location>
</feature>
<protein>
    <recommendedName>
        <fullName evidence="1">Elongation factor P</fullName>
        <shortName evidence="1">EF-P</shortName>
    </recommendedName>
</protein>
<accession>B8CPB0</accession>
<proteinExistence type="inferred from homology"/>
<name>EFP_SHEPW</name>
<gene>
    <name evidence="1" type="primary">efp</name>
    <name type="ordered locus">swp_2618</name>
</gene>
<keyword id="KW-0963">Cytoplasm</keyword>
<keyword id="KW-0251">Elongation factor</keyword>
<keyword id="KW-0648">Protein biosynthesis</keyword>
<comment type="function">
    <text evidence="1">Involved in peptide bond synthesis. Stimulates efficient translation and peptide-bond synthesis on native or reconstituted 70S ribosomes in vitro. Probably functions indirectly by altering the affinity of the ribosome for aminoacyl-tRNA, thus increasing their reactivity as acceptors for peptidyl transferase.</text>
</comment>
<comment type="pathway">
    <text evidence="1">Protein biosynthesis; polypeptide chain elongation.</text>
</comment>
<comment type="subcellular location">
    <subcellularLocation>
        <location evidence="1">Cytoplasm</location>
    </subcellularLocation>
</comment>
<comment type="similarity">
    <text evidence="1">Belongs to the elongation factor P family.</text>
</comment>